<accession>A9L986</accession>
<name>RPOC2_LEMMI</name>
<keyword id="KW-0150">Chloroplast</keyword>
<keyword id="KW-0240">DNA-directed RNA polymerase</keyword>
<keyword id="KW-0479">Metal-binding</keyword>
<keyword id="KW-0548">Nucleotidyltransferase</keyword>
<keyword id="KW-0934">Plastid</keyword>
<keyword id="KW-0804">Transcription</keyword>
<keyword id="KW-0808">Transferase</keyword>
<keyword id="KW-0862">Zinc</keyword>
<reference key="1">
    <citation type="journal article" date="2008" name="J. Mol. Evol.">
        <title>Complete sequence of the Duckweed (Lemna minor) chloroplast genome: structural organization and phylogenetic relationships to other angiosperms.</title>
        <authorList>
            <person name="Mardanov A.V."/>
            <person name="Ravin N.V."/>
            <person name="Kuznetsov B.B."/>
            <person name="Samigullin T.H."/>
            <person name="Antonov A.S."/>
            <person name="Kolganova T.V."/>
            <person name="Skyabin K.G."/>
        </authorList>
    </citation>
    <scope>NUCLEOTIDE SEQUENCE [LARGE SCALE GENOMIC DNA]</scope>
</reference>
<dbReference type="EC" id="2.7.7.6" evidence="1"/>
<dbReference type="EMBL" id="DQ400350">
    <property type="protein sequence ID" value="ABD48485.1"/>
    <property type="molecule type" value="Genomic_DNA"/>
</dbReference>
<dbReference type="RefSeq" id="YP_001595498.1">
    <property type="nucleotide sequence ID" value="NC_010109.1"/>
</dbReference>
<dbReference type="SMR" id="A9L986"/>
<dbReference type="GeneID" id="5787539"/>
<dbReference type="GO" id="GO:0009507">
    <property type="term" value="C:chloroplast"/>
    <property type="evidence" value="ECO:0007669"/>
    <property type="project" value="UniProtKB-SubCell"/>
</dbReference>
<dbReference type="GO" id="GO:0000428">
    <property type="term" value="C:DNA-directed RNA polymerase complex"/>
    <property type="evidence" value="ECO:0007669"/>
    <property type="project" value="UniProtKB-KW"/>
</dbReference>
<dbReference type="GO" id="GO:0005739">
    <property type="term" value="C:mitochondrion"/>
    <property type="evidence" value="ECO:0007669"/>
    <property type="project" value="GOC"/>
</dbReference>
<dbReference type="GO" id="GO:0003677">
    <property type="term" value="F:DNA binding"/>
    <property type="evidence" value="ECO:0007669"/>
    <property type="project" value="UniProtKB-UniRule"/>
</dbReference>
<dbReference type="GO" id="GO:0003899">
    <property type="term" value="F:DNA-directed RNA polymerase activity"/>
    <property type="evidence" value="ECO:0007669"/>
    <property type="project" value="UniProtKB-UniRule"/>
</dbReference>
<dbReference type="GO" id="GO:0008270">
    <property type="term" value="F:zinc ion binding"/>
    <property type="evidence" value="ECO:0007669"/>
    <property type="project" value="UniProtKB-UniRule"/>
</dbReference>
<dbReference type="GO" id="GO:0006351">
    <property type="term" value="P:DNA-templated transcription"/>
    <property type="evidence" value="ECO:0007669"/>
    <property type="project" value="UniProtKB-UniRule"/>
</dbReference>
<dbReference type="CDD" id="cd02655">
    <property type="entry name" value="RNAP_beta'_C"/>
    <property type="match status" value="1"/>
</dbReference>
<dbReference type="FunFam" id="1.10.132.30:FF:000002">
    <property type="entry name" value="DNA-directed RNA polymerase subunit beta"/>
    <property type="match status" value="1"/>
</dbReference>
<dbReference type="Gene3D" id="1.10.132.30">
    <property type="match status" value="1"/>
</dbReference>
<dbReference type="Gene3D" id="1.10.150.390">
    <property type="match status" value="1"/>
</dbReference>
<dbReference type="Gene3D" id="1.10.1790.20">
    <property type="match status" value="1"/>
</dbReference>
<dbReference type="Gene3D" id="1.10.274.100">
    <property type="entry name" value="RNA polymerase Rpb1, domain 3"/>
    <property type="match status" value="1"/>
</dbReference>
<dbReference type="HAMAP" id="MF_01324">
    <property type="entry name" value="RNApol_bact_RpoC2"/>
    <property type="match status" value="1"/>
</dbReference>
<dbReference type="InterPro" id="IPR012756">
    <property type="entry name" value="DNA-dir_RpoC2_beta_pp"/>
</dbReference>
<dbReference type="InterPro" id="IPR050254">
    <property type="entry name" value="RNA_pol_beta''_euk"/>
</dbReference>
<dbReference type="InterPro" id="IPR042102">
    <property type="entry name" value="RNA_pol_Rpb1_3_sf"/>
</dbReference>
<dbReference type="InterPro" id="IPR007083">
    <property type="entry name" value="RNA_pol_Rpb1_4"/>
</dbReference>
<dbReference type="InterPro" id="IPR007081">
    <property type="entry name" value="RNA_pol_Rpb1_5"/>
</dbReference>
<dbReference type="InterPro" id="IPR038120">
    <property type="entry name" value="Rpb1_funnel_sf"/>
</dbReference>
<dbReference type="NCBIfam" id="TIGR02388">
    <property type="entry name" value="rpoC2_cyan"/>
    <property type="match status" value="1"/>
</dbReference>
<dbReference type="PANTHER" id="PTHR34995">
    <property type="entry name" value="DNA-DIRECTED RNA POLYMERASE SUBUNIT BETA"/>
    <property type="match status" value="1"/>
</dbReference>
<dbReference type="PANTHER" id="PTHR34995:SF1">
    <property type="entry name" value="DNA-DIRECTED RNA POLYMERASE SUBUNIT BETA"/>
    <property type="match status" value="1"/>
</dbReference>
<dbReference type="Pfam" id="PF05000">
    <property type="entry name" value="RNA_pol_Rpb1_4"/>
    <property type="match status" value="1"/>
</dbReference>
<dbReference type="Pfam" id="PF04998">
    <property type="entry name" value="RNA_pol_Rpb1_5"/>
    <property type="match status" value="2"/>
</dbReference>
<dbReference type="SUPFAM" id="SSF64484">
    <property type="entry name" value="beta and beta-prime subunits of DNA dependent RNA-polymerase"/>
    <property type="match status" value="1"/>
</dbReference>
<comment type="function">
    <text evidence="1">DNA-dependent RNA polymerase catalyzes the transcription of DNA into RNA using the four ribonucleoside triphosphates as substrates.</text>
</comment>
<comment type="catalytic activity">
    <reaction evidence="1">
        <text>RNA(n) + a ribonucleoside 5'-triphosphate = RNA(n+1) + diphosphate</text>
        <dbReference type="Rhea" id="RHEA:21248"/>
        <dbReference type="Rhea" id="RHEA-COMP:14527"/>
        <dbReference type="Rhea" id="RHEA-COMP:17342"/>
        <dbReference type="ChEBI" id="CHEBI:33019"/>
        <dbReference type="ChEBI" id="CHEBI:61557"/>
        <dbReference type="ChEBI" id="CHEBI:140395"/>
        <dbReference type="EC" id="2.7.7.6"/>
    </reaction>
</comment>
<comment type="cofactor">
    <cofactor evidence="1">
        <name>Zn(2+)</name>
        <dbReference type="ChEBI" id="CHEBI:29105"/>
    </cofactor>
    <text evidence="1">Binds 1 Zn(2+) ion per subunit.</text>
</comment>
<comment type="subunit">
    <text evidence="1">In plastids the minimal PEP RNA polymerase catalytic core is composed of four subunits: alpha, beta, beta', and beta''. When a (nuclear-encoded) sigma factor is associated with the core the holoenzyme is formed, which can initiate transcription.</text>
</comment>
<comment type="subcellular location">
    <subcellularLocation>
        <location evidence="1">Plastid</location>
        <location evidence="1">Chloroplast</location>
    </subcellularLocation>
</comment>
<comment type="similarity">
    <text evidence="1">Belongs to the RNA polymerase beta' chain family. RpoC2 subfamily.</text>
</comment>
<sequence length="1366" mass="154138">MAERADLVFHNKVIDGAAMKRLISRLIDHFGMAYTSHILDQVKTLGFQQATATSISLGIDDLLTIPSKGWLVQDAEQQSLILEKHHHYGNVHAVEKLRQSIEIWYATSEYLRQEMNPNFRMTDPSNPVHLMSFSGARGNASQVHQLVGMRGLMSDPQGQMIDLPIQSNLREGLSLTEYIISCYGARKGVVDTAVRTSDAGYLTRRLVEVVQHIIVRRTDCGTIRSISVSPRNGVPERIFIQTLIGRVLADDIYIGPRCIAARNQDIGIGLVNRFISFRAQPIHIRTPFTCRSTSWICQLCYGRSPTHGDLVELGEAVGIIAGQSIGEPGTQLTLRTFHTGGVFTGGTAEHVRAPFNGKIKFNEDLVHPTRTRHGHPAFLCSIDLYVTIESQDIIHNVNIPPKSLILVQNDQYVESEQVIAEIRAGAATLNFKEKVRKHIYSESEGEMHWSTDVYHAPEYTYGNVHLLPKTSHLWILAVGTCRYSIVSFSLHKDQDQINAHSLSLEERYISDLSVTKDLARHQLFSSDSSSKKRGGTFDYARPDGSISNGHWNLQYPFILHENSDFLAKRRRNKFIIPLQYDQERDKELIPHFGVSIEIPINGILRRNSILAYFDDPRYRRNSSGITKYGAVEVDSILKKEDLIEYRGTKELSPKYQTKVDRFFFIPEEVHVLPGSSLIMVRNNSIIGVDTPLTLNIRSRVGGLVRVERKKKSIELKIFSGDIHFPGETDKISRHSGILIPPGTGKMTSKESKKLKNWIYVQRITPTKKKYFVSVRPVVTYEIADGINLATFFPKDLLQEGDNIQLRVVNYILYGNGKPIRGISHTSIQLVRTCLVLNWHQEEKSSIEDSHASFVEIKTNDLTCNFIRIELGKSPLLYTGKRNSVVSSGLINHNGLDYLNSNPFYSKAKIPSLTKQKGTGGTLLNGNKECQSLKILLSSNYSRIGPFNGLKYNTVTKQSIKADPVTPIRNCLGLLGTVVLKIANFYSSCHLITYNKTLLKKYFLIENLSQTFQGIIFFLIDENRGIYNLDPCSKTVFNPFDLNWRFFHHDYCDETSTLITLGQIFCENVCLFKYGSQKKSGQVIIVHVDYLVIRSAKPYLATPGATVHGHYGETLHEGDTLVTFIYEKSRSGDITQGLPKVEQVLEVRSIDSISTNLEKRVKAWNERISRILGNPWGFLISTELTIAQSRISLVNKIQKVYRSQGVQIHNRHLEIIVRQVTSKVLVSEDGMSNVFLPGELIGLLRAERAGRALDEAISYRAILLGITRASLNTQSFISEASFQETARVLAKAALRGRIDWLKGLKENVVLGGIIPVGTGFKKLVHHSRQHKNIHLEIKNKNLFEGKMRDILFHHREFLSSCIPNNFQ</sequence>
<geneLocation type="chloroplast"/>
<feature type="chain" id="PRO_0000353566" description="DNA-directed RNA polymerase subunit beta''">
    <location>
        <begin position="1"/>
        <end position="1366"/>
    </location>
</feature>
<feature type="binding site" evidence="1">
    <location>
        <position position="220"/>
    </location>
    <ligand>
        <name>Zn(2+)</name>
        <dbReference type="ChEBI" id="CHEBI:29105"/>
    </ligand>
</feature>
<feature type="binding site" evidence="1">
    <location>
        <position position="290"/>
    </location>
    <ligand>
        <name>Zn(2+)</name>
        <dbReference type="ChEBI" id="CHEBI:29105"/>
    </ligand>
</feature>
<feature type="binding site" evidence="1">
    <location>
        <position position="297"/>
    </location>
    <ligand>
        <name>Zn(2+)</name>
        <dbReference type="ChEBI" id="CHEBI:29105"/>
    </ligand>
</feature>
<feature type="binding site" evidence="1">
    <location>
        <position position="300"/>
    </location>
    <ligand>
        <name>Zn(2+)</name>
        <dbReference type="ChEBI" id="CHEBI:29105"/>
    </ligand>
</feature>
<gene>
    <name evidence="1" type="primary">rpoC2</name>
</gene>
<organism>
    <name type="scientific">Lemna minor</name>
    <name type="common">Common duckweed</name>
    <dbReference type="NCBI Taxonomy" id="4472"/>
    <lineage>
        <taxon>Eukaryota</taxon>
        <taxon>Viridiplantae</taxon>
        <taxon>Streptophyta</taxon>
        <taxon>Embryophyta</taxon>
        <taxon>Tracheophyta</taxon>
        <taxon>Spermatophyta</taxon>
        <taxon>Magnoliopsida</taxon>
        <taxon>Liliopsida</taxon>
        <taxon>Araceae</taxon>
        <taxon>Lemnoideae</taxon>
        <taxon>Lemna</taxon>
    </lineage>
</organism>
<protein>
    <recommendedName>
        <fullName evidence="1">DNA-directed RNA polymerase subunit beta''</fullName>
        <ecNumber evidence="1">2.7.7.6</ecNumber>
    </recommendedName>
    <alternativeName>
        <fullName evidence="1">PEP</fullName>
    </alternativeName>
    <alternativeName>
        <fullName evidence="1">Plastid-encoded RNA polymerase subunit beta''</fullName>
        <shortName evidence="1">RNA polymerase subunit beta''</shortName>
    </alternativeName>
</protein>
<evidence type="ECO:0000255" key="1">
    <source>
        <dbReference type="HAMAP-Rule" id="MF_01324"/>
    </source>
</evidence>
<proteinExistence type="inferred from homology"/>